<protein>
    <recommendedName>
        <fullName>Uncharacterized gene 49 protein</fullName>
    </recommendedName>
</protein>
<evidence type="ECO:0000305" key="1"/>
<organism>
    <name type="scientific">Equine herpesvirus 2 (strain 86/87)</name>
    <name type="common">EHV-2</name>
    <dbReference type="NCBI Taxonomy" id="82831"/>
    <lineage>
        <taxon>Viruses</taxon>
        <taxon>Duplodnaviria</taxon>
        <taxon>Heunggongvirae</taxon>
        <taxon>Peploviricota</taxon>
        <taxon>Herviviricetes</taxon>
        <taxon>Herpesvirales</taxon>
        <taxon>Orthoherpesviridae</taxon>
        <taxon>Gammaherpesvirinae</taxon>
        <taxon>Percavirus</taxon>
        <taxon>Percavirus equidgamma2</taxon>
        <taxon>Equid gammaherpesvirus 2</taxon>
    </lineage>
</organism>
<proteinExistence type="inferred from homology"/>
<accession>Q66651</accession>
<name>VG49_EHV2</name>
<dbReference type="EMBL" id="U20824">
    <property type="protein sequence ID" value="AAC13837.1"/>
    <property type="molecule type" value="Genomic_DNA"/>
</dbReference>
<dbReference type="PIR" id="S55644">
    <property type="entry name" value="S55644"/>
</dbReference>
<dbReference type="SMR" id="Q66651"/>
<dbReference type="KEGG" id="vg:1461041"/>
<dbReference type="Proteomes" id="UP000007083">
    <property type="component" value="Segment"/>
</dbReference>
<dbReference type="InterPro" id="IPR006878">
    <property type="entry name" value="Herpes_BBRF1"/>
</dbReference>
<dbReference type="Pfam" id="PF04793">
    <property type="entry name" value="Herpes_BBRF1"/>
    <property type="match status" value="1"/>
</dbReference>
<reference key="1">
    <citation type="journal article" date="1995" name="J. Mol. Biol.">
        <title>The DNA sequence of equine herpesvirus 2.</title>
        <authorList>
            <person name="Telford E.A.R."/>
            <person name="Watson M.S."/>
            <person name="Aird H.C."/>
            <person name="Perry J."/>
            <person name="Davison A.J."/>
        </authorList>
    </citation>
    <scope>NUCLEOTIDE SEQUENCE [LARGE SCALE GENOMIC DNA]</scope>
</reference>
<comment type="similarity">
    <text evidence="1">Belongs to the herpesviridae BBRF1 family.</text>
</comment>
<keyword id="KW-1185">Reference proteome</keyword>
<organismHost>
    <name type="scientific">Equus caballus</name>
    <name type="common">Horse</name>
    <dbReference type="NCBI Taxonomy" id="9796"/>
</organismHost>
<feature type="chain" id="PRO_0000406031" description="Uncharacterized gene 49 protein">
    <location>
        <begin position="1"/>
        <end position="302"/>
    </location>
</feature>
<gene>
    <name type="primary">49</name>
</gene>
<sequence>MEVTSQERSVCAVLGDYHIPDEAAVLREYKGISVTDPRHHPSLSKAKTCLDRSIYMLKICVALFANRQREMDILQAVTDNVRYFLGRVRDAAGGCDEALRDLIRETARYSPHISPRIGERLLAVLRVRYPGYAPSGGPWEGLMEDSIPVWCSHHMTQLRDEERVLECFVERSGTVYSLSKFCSLASELFYEDSLWHRLPDPEFIRPYNLAVFWVGVMKKFESVLAKKLVDDHLTCYTTVAKYDIAAACEAVRRCGERRASGVTLELVDWLRWKLRDFGVDSNDSHASEIISVLQILRGNHLV</sequence>